<protein>
    <recommendedName>
        <fullName evidence="1">Phosphatidylglycerol--prolipoprotein diacylglyceryl transferase</fullName>
        <ecNumber evidence="1">2.5.1.145</ecNumber>
    </recommendedName>
</protein>
<feature type="chain" id="PRO_1000053524" description="Phosphatidylglycerol--prolipoprotein diacylglyceryl transferase">
    <location>
        <begin position="1"/>
        <end position="273"/>
    </location>
</feature>
<feature type="transmembrane region" description="Helical" evidence="1">
    <location>
        <begin position="21"/>
        <end position="41"/>
    </location>
</feature>
<feature type="transmembrane region" description="Helical" evidence="1">
    <location>
        <begin position="60"/>
        <end position="80"/>
    </location>
</feature>
<feature type="transmembrane region" description="Helical" evidence="1">
    <location>
        <begin position="95"/>
        <end position="115"/>
    </location>
</feature>
<feature type="transmembrane region" description="Helical" evidence="1">
    <location>
        <begin position="124"/>
        <end position="144"/>
    </location>
</feature>
<feature type="transmembrane region" description="Helical" evidence="1">
    <location>
        <begin position="176"/>
        <end position="196"/>
    </location>
</feature>
<feature type="transmembrane region" description="Helical" evidence="1">
    <location>
        <begin position="203"/>
        <end position="223"/>
    </location>
</feature>
<feature type="transmembrane region" description="Helical" evidence="1">
    <location>
        <begin position="237"/>
        <end position="257"/>
    </location>
</feature>
<feature type="binding site" evidence="1">
    <location>
        <position position="143"/>
    </location>
    <ligand>
        <name>a 1,2-diacyl-sn-glycero-3-phospho-(1'-sn-glycerol)</name>
        <dbReference type="ChEBI" id="CHEBI:64716"/>
    </ligand>
</feature>
<sequence length="273" mass="30668">MSQGYLEFPNIDPVLVSIGPVSVRWYGLMYLVGFMFALWLANRRADKPGSGWTREQVSDLLFAGFLGVVIGGRVGYVIFYNFDLFLADPLYLFKVWTGGMSFHGGLLGVITAMFWYAHKNGRTFFGVADFVAPLVPFGLGMGRMGNFMNSELWGRVTDVPWAIIFPNGGPLPRHPSQLYEMFLEGIVLFFILNWFIKKPRPLGAVSGLFLAGYGTFRFLVEFVREPDAQLGLFGGYISMGQILSSPMIILGILMMVWAYKRGLYQDKVQAETK</sequence>
<keyword id="KW-0997">Cell inner membrane</keyword>
<keyword id="KW-1003">Cell membrane</keyword>
<keyword id="KW-0472">Membrane</keyword>
<keyword id="KW-0808">Transferase</keyword>
<keyword id="KW-0812">Transmembrane</keyword>
<keyword id="KW-1133">Transmembrane helix</keyword>
<dbReference type="EC" id="2.5.1.145" evidence="1"/>
<dbReference type="EMBL" id="CP000789">
    <property type="protein sequence ID" value="ABU69969.1"/>
    <property type="molecule type" value="Genomic_DNA"/>
</dbReference>
<dbReference type="RefSeq" id="WP_005428620.1">
    <property type="nucleotide sequence ID" value="NC_022269.1"/>
</dbReference>
<dbReference type="SMR" id="A7MXL0"/>
<dbReference type="GeneID" id="67378398"/>
<dbReference type="KEGG" id="vha:VIBHAR_00970"/>
<dbReference type="PATRIC" id="fig|338187.25.peg.1651"/>
<dbReference type="UniPathway" id="UPA00664"/>
<dbReference type="Proteomes" id="UP000008152">
    <property type="component" value="Chromosome I"/>
</dbReference>
<dbReference type="GO" id="GO:0005886">
    <property type="term" value="C:plasma membrane"/>
    <property type="evidence" value="ECO:0007669"/>
    <property type="project" value="UniProtKB-SubCell"/>
</dbReference>
<dbReference type="GO" id="GO:0008961">
    <property type="term" value="F:phosphatidylglycerol-prolipoprotein diacylglyceryl transferase activity"/>
    <property type="evidence" value="ECO:0007669"/>
    <property type="project" value="UniProtKB-UniRule"/>
</dbReference>
<dbReference type="GO" id="GO:0042158">
    <property type="term" value="P:lipoprotein biosynthetic process"/>
    <property type="evidence" value="ECO:0007669"/>
    <property type="project" value="UniProtKB-UniRule"/>
</dbReference>
<dbReference type="HAMAP" id="MF_01147">
    <property type="entry name" value="Lgt"/>
    <property type="match status" value="1"/>
</dbReference>
<dbReference type="InterPro" id="IPR001640">
    <property type="entry name" value="Lgt"/>
</dbReference>
<dbReference type="NCBIfam" id="TIGR00544">
    <property type="entry name" value="lgt"/>
    <property type="match status" value="1"/>
</dbReference>
<dbReference type="PANTHER" id="PTHR30589:SF0">
    <property type="entry name" value="PHOSPHATIDYLGLYCEROL--PROLIPOPROTEIN DIACYLGLYCERYL TRANSFERASE"/>
    <property type="match status" value="1"/>
</dbReference>
<dbReference type="PANTHER" id="PTHR30589">
    <property type="entry name" value="PROLIPOPROTEIN DIACYLGLYCERYL TRANSFERASE"/>
    <property type="match status" value="1"/>
</dbReference>
<dbReference type="Pfam" id="PF01790">
    <property type="entry name" value="LGT"/>
    <property type="match status" value="1"/>
</dbReference>
<dbReference type="PROSITE" id="PS01311">
    <property type="entry name" value="LGT"/>
    <property type="match status" value="1"/>
</dbReference>
<evidence type="ECO:0000255" key="1">
    <source>
        <dbReference type="HAMAP-Rule" id="MF_01147"/>
    </source>
</evidence>
<reference key="1">
    <citation type="submission" date="2007-08" db="EMBL/GenBank/DDBJ databases">
        <authorList>
            <consortium name="The Vibrio harveyi Genome Sequencing Project"/>
            <person name="Bassler B."/>
            <person name="Clifton S.W."/>
            <person name="Fulton L."/>
            <person name="Delehaunty K."/>
            <person name="Fronick C."/>
            <person name="Harrison M."/>
            <person name="Markivic C."/>
            <person name="Fulton R."/>
            <person name="Tin-Wollam A.-M."/>
            <person name="Shah N."/>
            <person name="Pepin K."/>
            <person name="Nash W."/>
            <person name="Thiruvilangam P."/>
            <person name="Bhonagiri V."/>
            <person name="Waters C."/>
            <person name="Tu K.C."/>
            <person name="Irgon J."/>
            <person name="Wilson R.K."/>
        </authorList>
    </citation>
    <scope>NUCLEOTIDE SEQUENCE [LARGE SCALE GENOMIC DNA]</scope>
    <source>
        <strain>ATCC BAA-1116 / BB120</strain>
    </source>
</reference>
<proteinExistence type="inferred from homology"/>
<accession>A7MXL0</accession>
<name>LGT_VIBC1</name>
<comment type="function">
    <text evidence="1">Catalyzes the transfer of the diacylglyceryl group from phosphatidylglycerol to the sulfhydryl group of the N-terminal cysteine of a prolipoprotein, the first step in the formation of mature lipoproteins.</text>
</comment>
<comment type="catalytic activity">
    <reaction evidence="1">
        <text>L-cysteinyl-[prolipoprotein] + a 1,2-diacyl-sn-glycero-3-phospho-(1'-sn-glycerol) = an S-1,2-diacyl-sn-glyceryl-L-cysteinyl-[prolipoprotein] + sn-glycerol 1-phosphate + H(+)</text>
        <dbReference type="Rhea" id="RHEA:56712"/>
        <dbReference type="Rhea" id="RHEA-COMP:14679"/>
        <dbReference type="Rhea" id="RHEA-COMP:14680"/>
        <dbReference type="ChEBI" id="CHEBI:15378"/>
        <dbReference type="ChEBI" id="CHEBI:29950"/>
        <dbReference type="ChEBI" id="CHEBI:57685"/>
        <dbReference type="ChEBI" id="CHEBI:64716"/>
        <dbReference type="ChEBI" id="CHEBI:140658"/>
        <dbReference type="EC" id="2.5.1.145"/>
    </reaction>
</comment>
<comment type="pathway">
    <text evidence="1">Protein modification; lipoprotein biosynthesis (diacylglyceryl transfer).</text>
</comment>
<comment type="subcellular location">
    <subcellularLocation>
        <location evidence="1">Cell inner membrane</location>
        <topology evidence="1">Multi-pass membrane protein</topology>
    </subcellularLocation>
</comment>
<comment type="similarity">
    <text evidence="1">Belongs to the Lgt family.</text>
</comment>
<organism>
    <name type="scientific">Vibrio campbellii (strain ATCC BAA-1116)</name>
    <dbReference type="NCBI Taxonomy" id="2902295"/>
    <lineage>
        <taxon>Bacteria</taxon>
        <taxon>Pseudomonadati</taxon>
        <taxon>Pseudomonadota</taxon>
        <taxon>Gammaproteobacteria</taxon>
        <taxon>Vibrionales</taxon>
        <taxon>Vibrionaceae</taxon>
        <taxon>Vibrio</taxon>
    </lineage>
</organism>
<gene>
    <name evidence="1" type="primary">lgt</name>
    <name type="ordered locus">VIBHAR_00970</name>
</gene>